<organism>
    <name type="scientific">Drosophila mojavensis</name>
    <name type="common">Fruit fly</name>
    <dbReference type="NCBI Taxonomy" id="7230"/>
    <lineage>
        <taxon>Eukaryota</taxon>
        <taxon>Metazoa</taxon>
        <taxon>Ecdysozoa</taxon>
        <taxon>Arthropoda</taxon>
        <taxon>Hexapoda</taxon>
        <taxon>Insecta</taxon>
        <taxon>Pterygota</taxon>
        <taxon>Neoptera</taxon>
        <taxon>Endopterygota</taxon>
        <taxon>Diptera</taxon>
        <taxon>Brachycera</taxon>
        <taxon>Muscomorpha</taxon>
        <taxon>Ephydroidea</taxon>
        <taxon>Drosophilidae</taxon>
        <taxon>Drosophila</taxon>
    </lineage>
</organism>
<accession>B4KML2</accession>
<dbReference type="EMBL" id="CH933808">
    <property type="protein sequence ID" value="EDW10859.1"/>
    <property type="molecule type" value="Genomic_DNA"/>
</dbReference>
<dbReference type="SMR" id="B4KML2"/>
<dbReference type="FunCoup" id="B4KML2">
    <property type="interactions" value="1537"/>
</dbReference>
<dbReference type="EnsemblMetazoa" id="FBtr0172061">
    <property type="protein sequence ID" value="FBpp0170553"/>
    <property type="gene ID" value="FBgn0144066"/>
</dbReference>
<dbReference type="EnsemblMetazoa" id="XM_002006888.4">
    <property type="protein sequence ID" value="XP_002006924.1"/>
    <property type="gene ID" value="LOC6581179"/>
</dbReference>
<dbReference type="GeneID" id="6581179"/>
<dbReference type="KEGG" id="dmo:Dmoj_GI21336"/>
<dbReference type="CTD" id="36494"/>
<dbReference type="eggNOG" id="KOG2749">
    <property type="taxonomic scope" value="Eukaryota"/>
</dbReference>
<dbReference type="HOGENOM" id="CLU_018195_1_0_1"/>
<dbReference type="InParanoid" id="B4KML2"/>
<dbReference type="OMA" id="VQYVNCH"/>
<dbReference type="OrthoDB" id="258143at2759"/>
<dbReference type="PhylomeDB" id="B4KML2"/>
<dbReference type="Proteomes" id="UP000009192">
    <property type="component" value="Unassembled WGS sequence"/>
</dbReference>
<dbReference type="GO" id="GO:0005849">
    <property type="term" value="C:mRNA cleavage factor complex"/>
    <property type="evidence" value="ECO:0007669"/>
    <property type="project" value="InterPro"/>
</dbReference>
<dbReference type="GO" id="GO:0000214">
    <property type="term" value="C:tRNA-intron endonuclease complex"/>
    <property type="evidence" value="ECO:0000250"/>
    <property type="project" value="UniProtKB"/>
</dbReference>
<dbReference type="GO" id="GO:0005524">
    <property type="term" value="F:ATP binding"/>
    <property type="evidence" value="ECO:0007669"/>
    <property type="project" value="UniProtKB-UniRule"/>
</dbReference>
<dbReference type="GO" id="GO:0051731">
    <property type="term" value="F:polynucleotide 5'-hydroxyl-kinase activity"/>
    <property type="evidence" value="ECO:0007669"/>
    <property type="project" value="InterPro"/>
</dbReference>
<dbReference type="GO" id="GO:0031124">
    <property type="term" value="P:mRNA 3'-end processing"/>
    <property type="evidence" value="ECO:0007669"/>
    <property type="project" value="UniProtKB-UniRule"/>
</dbReference>
<dbReference type="GO" id="GO:0006388">
    <property type="term" value="P:tRNA splicing, via endonucleolytic cleavage and ligation"/>
    <property type="evidence" value="ECO:0000250"/>
    <property type="project" value="UniProtKB"/>
</dbReference>
<dbReference type="CDD" id="cd01983">
    <property type="entry name" value="SIMIBI"/>
    <property type="match status" value="1"/>
</dbReference>
<dbReference type="FunFam" id="2.40.30.330:FF:000001">
    <property type="entry name" value="Protein CLP1 homolog"/>
    <property type="match status" value="1"/>
</dbReference>
<dbReference type="FunFam" id="3.40.50.300:FF:000454">
    <property type="entry name" value="Protein CLP1 homolog"/>
    <property type="match status" value="1"/>
</dbReference>
<dbReference type="FunFam" id="2.60.120.1030:FF:000001">
    <property type="entry name" value="Protein CLP1 homolog 5"/>
    <property type="match status" value="1"/>
</dbReference>
<dbReference type="Gene3D" id="2.60.120.1030">
    <property type="entry name" value="Clp1, DNA binding domain"/>
    <property type="match status" value="1"/>
</dbReference>
<dbReference type="Gene3D" id="3.40.50.300">
    <property type="entry name" value="P-loop containing nucleotide triphosphate hydrolases"/>
    <property type="match status" value="1"/>
</dbReference>
<dbReference type="Gene3D" id="2.40.30.330">
    <property type="entry name" value="Pre-mRNA cleavage complex subunit Clp1, C-terminal domain"/>
    <property type="match status" value="1"/>
</dbReference>
<dbReference type="HAMAP" id="MF_03035">
    <property type="entry name" value="Clp1"/>
    <property type="match status" value="1"/>
</dbReference>
<dbReference type="InterPro" id="IPR028606">
    <property type="entry name" value="Clp1"/>
</dbReference>
<dbReference type="InterPro" id="IPR045116">
    <property type="entry name" value="Clp1/Grc3"/>
</dbReference>
<dbReference type="InterPro" id="IPR010655">
    <property type="entry name" value="Clp1_C"/>
</dbReference>
<dbReference type="InterPro" id="IPR038238">
    <property type="entry name" value="Clp1_C_sf"/>
</dbReference>
<dbReference type="InterPro" id="IPR032324">
    <property type="entry name" value="Clp1_N"/>
</dbReference>
<dbReference type="InterPro" id="IPR038239">
    <property type="entry name" value="Clp1_N_sf"/>
</dbReference>
<dbReference type="InterPro" id="IPR032319">
    <property type="entry name" value="CLP1_P"/>
</dbReference>
<dbReference type="InterPro" id="IPR027417">
    <property type="entry name" value="P-loop_NTPase"/>
</dbReference>
<dbReference type="PANTHER" id="PTHR12755">
    <property type="entry name" value="CLEAVAGE/POLYADENYLATION FACTOR IA SUBUNIT CLP1P"/>
    <property type="match status" value="1"/>
</dbReference>
<dbReference type="PANTHER" id="PTHR12755:SF6">
    <property type="entry name" value="POLYRIBONUCLEOTIDE 5'-HYDROXYL-KINASE CLP1"/>
    <property type="match status" value="1"/>
</dbReference>
<dbReference type="Pfam" id="PF06807">
    <property type="entry name" value="Clp1"/>
    <property type="match status" value="1"/>
</dbReference>
<dbReference type="Pfam" id="PF16573">
    <property type="entry name" value="CLP1_N"/>
    <property type="match status" value="1"/>
</dbReference>
<dbReference type="Pfam" id="PF16575">
    <property type="entry name" value="CLP1_P"/>
    <property type="match status" value="1"/>
</dbReference>
<dbReference type="SUPFAM" id="SSF52540">
    <property type="entry name" value="P-loop containing nucleoside triphosphate hydrolases"/>
    <property type="match status" value="1"/>
</dbReference>
<comment type="function">
    <text evidence="1">Required for endonucleolytic cleavage during polyadenylation-dependent pre-mRNA 3'-end formation.</text>
</comment>
<comment type="subcellular location">
    <subcellularLocation>
        <location evidence="1">Nucleus</location>
    </subcellularLocation>
</comment>
<comment type="similarity">
    <text evidence="1">Belongs to the Clp1 family. Clp1 subfamily.</text>
</comment>
<gene>
    <name type="primary">cbc</name>
    <name type="ORF">GI21336</name>
</gene>
<reference key="1">
    <citation type="journal article" date="2007" name="Nature">
        <title>Evolution of genes and genomes on the Drosophila phylogeny.</title>
        <authorList>
            <consortium name="Drosophila 12 genomes consortium"/>
        </authorList>
    </citation>
    <scope>NUCLEOTIDE SEQUENCE [LARGE SCALE GENOMIC DNA]</scope>
    <source>
        <strain>Tucson 15081-1352.22</strain>
    </source>
</reference>
<name>CLP1_DROMO</name>
<feature type="chain" id="PRO_0000375181" description="Protein CLP1 homolog">
    <location>
        <begin position="1"/>
        <end position="425"/>
    </location>
</feature>
<feature type="binding site" evidence="1">
    <location>
        <position position="18"/>
    </location>
    <ligand>
        <name>ATP</name>
        <dbReference type="ChEBI" id="CHEBI:30616"/>
    </ligand>
</feature>
<feature type="binding site" evidence="1">
    <location>
        <position position="59"/>
    </location>
    <ligand>
        <name>ATP</name>
        <dbReference type="ChEBI" id="CHEBI:30616"/>
    </ligand>
</feature>
<feature type="binding site" evidence="1">
    <location>
        <begin position="121"/>
        <end position="126"/>
    </location>
    <ligand>
        <name>ATP</name>
        <dbReference type="ChEBI" id="CHEBI:30616"/>
    </ligand>
</feature>
<sequence length="425" mass="47543">MSEDNNNGKEYILDADSELRFEIEQKDAKVFVTLISGFAELFGTELVKKKKYEFGIGAKVAIFTYQGCVLQVTGKMDVCYISKETPMIQYINCHAALEQFRTDAEEHDKRGPVILVVGPMDVGKSTLCRILLNYAVRVGRRPLYADLDVGQGAISIPGNIATILIERPASVEEGFAKTAPLVYHFGHKSPSGNSVLYNAVVSKMAEVTLQSLDANKRTKSSGIIVNTCGWVKGYGYKHLLHAARAYRARAIFVLDQERLYNDLLRDVPSNVHVVLLPKSGGVVERTKELRHESREQRIKEYFYGNMRTPFYPFSFEVKFQDLRLYKIGAPPLPDSCMPIGMKAEDNKKKVVAVTPTSSLLHHILTLSFAESTDENVIGTNVAGFCCVTEVDMERQSVMLLSPQPRPLPPNALLLWSELQFMDNHA</sequence>
<proteinExistence type="inferred from homology"/>
<protein>
    <recommendedName>
        <fullName evidence="1">Protein CLP1 homolog</fullName>
    </recommendedName>
</protein>
<evidence type="ECO:0000255" key="1">
    <source>
        <dbReference type="HAMAP-Rule" id="MF_03035"/>
    </source>
</evidence>
<keyword id="KW-0067">ATP-binding</keyword>
<keyword id="KW-0507">mRNA processing</keyword>
<keyword id="KW-0547">Nucleotide-binding</keyword>
<keyword id="KW-0539">Nucleus</keyword>
<keyword id="KW-1185">Reference proteome</keyword>